<evidence type="ECO:0000255" key="1">
    <source>
        <dbReference type="HAMAP-Rule" id="MF_00102"/>
    </source>
</evidence>
<evidence type="ECO:0000305" key="2"/>
<keyword id="KW-0028">Amino-acid biosynthesis</keyword>
<keyword id="KW-0963">Cytoplasm</keyword>
<keyword id="KW-0220">Diaminopimelate biosynthesis</keyword>
<keyword id="KW-0457">Lysine biosynthesis</keyword>
<keyword id="KW-0520">NAD</keyword>
<keyword id="KW-0521">NADP</keyword>
<keyword id="KW-0560">Oxidoreductase</keyword>
<sequence>MSEMRLIVAGAGGRMGRALTRAISETEGVVLTGALESPNSELLGKDAGTLAGLPANGVLLSADLWSLSANADGIVDFTVPQATIANVAIAAQRGIAHIIGTTGLSTSDNAVIQSVTDRAVVVKSGNMSLGVNLLAAIAKRVAQSLDDSFDIEIVEMHHRAKVDAPSGTALLLGEAVAAGRKIDLATHSARGRDGFTGARKPGDIGFASLRGGTVTGDHTVIFAGASERIELTHKAEDRMIFAHGALTAARWAKGKKPGLYSMADVLGLGDI</sequence>
<proteinExistence type="inferred from homology"/>
<organism>
    <name type="scientific">Rhodopseudomonas palustris (strain TIE-1)</name>
    <dbReference type="NCBI Taxonomy" id="395960"/>
    <lineage>
        <taxon>Bacteria</taxon>
        <taxon>Pseudomonadati</taxon>
        <taxon>Pseudomonadota</taxon>
        <taxon>Alphaproteobacteria</taxon>
        <taxon>Hyphomicrobiales</taxon>
        <taxon>Nitrobacteraceae</taxon>
        <taxon>Rhodopseudomonas</taxon>
    </lineage>
</organism>
<gene>
    <name evidence="1" type="primary">dapB</name>
    <name type="ordered locus">Rpal_0342</name>
</gene>
<reference key="1">
    <citation type="submission" date="2008-05" db="EMBL/GenBank/DDBJ databases">
        <title>Complete sequence of Rhodopseudomonas palustris TIE-1.</title>
        <authorList>
            <consortium name="US DOE Joint Genome Institute"/>
            <person name="Lucas S."/>
            <person name="Copeland A."/>
            <person name="Lapidus A."/>
            <person name="Glavina del Rio T."/>
            <person name="Dalin E."/>
            <person name="Tice H."/>
            <person name="Pitluck S."/>
            <person name="Chain P."/>
            <person name="Malfatti S."/>
            <person name="Shin M."/>
            <person name="Vergez L."/>
            <person name="Lang D."/>
            <person name="Schmutz J."/>
            <person name="Larimer F."/>
            <person name="Land M."/>
            <person name="Hauser L."/>
            <person name="Kyrpides N."/>
            <person name="Mikhailova N."/>
            <person name="Emerson D."/>
            <person name="Newman D.K."/>
            <person name="Roden E."/>
            <person name="Richardson P."/>
        </authorList>
    </citation>
    <scope>NUCLEOTIDE SEQUENCE [LARGE SCALE GENOMIC DNA]</scope>
    <source>
        <strain>TIE-1</strain>
    </source>
</reference>
<accession>B3Q978</accession>
<comment type="function">
    <text evidence="1">Catalyzes the conversion of 4-hydroxy-tetrahydrodipicolinate (HTPA) to tetrahydrodipicolinate.</text>
</comment>
<comment type="catalytic activity">
    <reaction evidence="1">
        <text>(S)-2,3,4,5-tetrahydrodipicolinate + NAD(+) + H2O = (2S,4S)-4-hydroxy-2,3,4,5-tetrahydrodipicolinate + NADH + H(+)</text>
        <dbReference type="Rhea" id="RHEA:35323"/>
        <dbReference type="ChEBI" id="CHEBI:15377"/>
        <dbReference type="ChEBI" id="CHEBI:15378"/>
        <dbReference type="ChEBI" id="CHEBI:16845"/>
        <dbReference type="ChEBI" id="CHEBI:57540"/>
        <dbReference type="ChEBI" id="CHEBI:57945"/>
        <dbReference type="ChEBI" id="CHEBI:67139"/>
        <dbReference type="EC" id="1.17.1.8"/>
    </reaction>
</comment>
<comment type="catalytic activity">
    <reaction evidence="1">
        <text>(S)-2,3,4,5-tetrahydrodipicolinate + NADP(+) + H2O = (2S,4S)-4-hydroxy-2,3,4,5-tetrahydrodipicolinate + NADPH + H(+)</text>
        <dbReference type="Rhea" id="RHEA:35331"/>
        <dbReference type="ChEBI" id="CHEBI:15377"/>
        <dbReference type="ChEBI" id="CHEBI:15378"/>
        <dbReference type="ChEBI" id="CHEBI:16845"/>
        <dbReference type="ChEBI" id="CHEBI:57783"/>
        <dbReference type="ChEBI" id="CHEBI:58349"/>
        <dbReference type="ChEBI" id="CHEBI:67139"/>
        <dbReference type="EC" id="1.17.1.8"/>
    </reaction>
</comment>
<comment type="pathway">
    <text evidence="1">Amino-acid biosynthesis; L-lysine biosynthesis via DAP pathway; (S)-tetrahydrodipicolinate from L-aspartate: step 4/4.</text>
</comment>
<comment type="subcellular location">
    <subcellularLocation>
        <location evidence="1">Cytoplasm</location>
    </subcellularLocation>
</comment>
<comment type="similarity">
    <text evidence="1">Belongs to the DapB family.</text>
</comment>
<comment type="caution">
    <text evidence="2">Was originally thought to be a dihydrodipicolinate reductase (DHDPR), catalyzing the conversion of dihydrodipicolinate to tetrahydrodipicolinate. However, it was shown in E.coli that the substrate of the enzymatic reaction is not dihydrodipicolinate (DHDP) but in fact (2S,4S)-4-hydroxy-2,3,4,5-tetrahydrodipicolinic acid (HTPA), the product released by the DapA-catalyzed reaction.</text>
</comment>
<name>DAPB_RHOPT</name>
<protein>
    <recommendedName>
        <fullName evidence="1">4-hydroxy-tetrahydrodipicolinate reductase</fullName>
        <shortName evidence="1">HTPA reductase</shortName>
        <ecNumber evidence="1">1.17.1.8</ecNumber>
    </recommendedName>
</protein>
<dbReference type="EC" id="1.17.1.8" evidence="1"/>
<dbReference type="EMBL" id="CP001096">
    <property type="protein sequence ID" value="ACE98902.1"/>
    <property type="molecule type" value="Genomic_DNA"/>
</dbReference>
<dbReference type="RefSeq" id="WP_011155907.1">
    <property type="nucleotide sequence ID" value="NC_011004.1"/>
</dbReference>
<dbReference type="SMR" id="B3Q978"/>
<dbReference type="GeneID" id="66891350"/>
<dbReference type="KEGG" id="rpt:Rpal_0342"/>
<dbReference type="HOGENOM" id="CLU_047479_2_1_5"/>
<dbReference type="OrthoDB" id="9790352at2"/>
<dbReference type="UniPathway" id="UPA00034">
    <property type="reaction ID" value="UER00018"/>
</dbReference>
<dbReference type="Proteomes" id="UP000001725">
    <property type="component" value="Chromosome"/>
</dbReference>
<dbReference type="GO" id="GO:0005829">
    <property type="term" value="C:cytosol"/>
    <property type="evidence" value="ECO:0007669"/>
    <property type="project" value="TreeGrafter"/>
</dbReference>
<dbReference type="GO" id="GO:0008839">
    <property type="term" value="F:4-hydroxy-tetrahydrodipicolinate reductase"/>
    <property type="evidence" value="ECO:0007669"/>
    <property type="project" value="UniProtKB-EC"/>
</dbReference>
<dbReference type="GO" id="GO:0051287">
    <property type="term" value="F:NAD binding"/>
    <property type="evidence" value="ECO:0007669"/>
    <property type="project" value="UniProtKB-UniRule"/>
</dbReference>
<dbReference type="GO" id="GO:0050661">
    <property type="term" value="F:NADP binding"/>
    <property type="evidence" value="ECO:0007669"/>
    <property type="project" value="UniProtKB-UniRule"/>
</dbReference>
<dbReference type="GO" id="GO:0016726">
    <property type="term" value="F:oxidoreductase activity, acting on CH or CH2 groups, NAD or NADP as acceptor"/>
    <property type="evidence" value="ECO:0007669"/>
    <property type="project" value="UniProtKB-UniRule"/>
</dbReference>
<dbReference type="GO" id="GO:0019877">
    <property type="term" value="P:diaminopimelate biosynthetic process"/>
    <property type="evidence" value="ECO:0007669"/>
    <property type="project" value="UniProtKB-UniRule"/>
</dbReference>
<dbReference type="GO" id="GO:0009089">
    <property type="term" value="P:lysine biosynthetic process via diaminopimelate"/>
    <property type="evidence" value="ECO:0007669"/>
    <property type="project" value="UniProtKB-UniRule"/>
</dbReference>
<dbReference type="CDD" id="cd02274">
    <property type="entry name" value="DHDPR_N"/>
    <property type="match status" value="1"/>
</dbReference>
<dbReference type="FunFam" id="3.30.360.10:FF:000004">
    <property type="entry name" value="4-hydroxy-tetrahydrodipicolinate reductase"/>
    <property type="match status" value="1"/>
</dbReference>
<dbReference type="Gene3D" id="3.30.360.10">
    <property type="entry name" value="Dihydrodipicolinate Reductase, domain 2"/>
    <property type="match status" value="1"/>
</dbReference>
<dbReference type="Gene3D" id="3.40.50.720">
    <property type="entry name" value="NAD(P)-binding Rossmann-like Domain"/>
    <property type="match status" value="1"/>
</dbReference>
<dbReference type="HAMAP" id="MF_00102">
    <property type="entry name" value="DapB"/>
    <property type="match status" value="1"/>
</dbReference>
<dbReference type="InterPro" id="IPR022663">
    <property type="entry name" value="DapB_C"/>
</dbReference>
<dbReference type="InterPro" id="IPR000846">
    <property type="entry name" value="DapB_N"/>
</dbReference>
<dbReference type="InterPro" id="IPR022664">
    <property type="entry name" value="DapB_N_CS"/>
</dbReference>
<dbReference type="InterPro" id="IPR023940">
    <property type="entry name" value="DHDPR_bac"/>
</dbReference>
<dbReference type="InterPro" id="IPR036291">
    <property type="entry name" value="NAD(P)-bd_dom_sf"/>
</dbReference>
<dbReference type="NCBIfam" id="TIGR00036">
    <property type="entry name" value="dapB"/>
    <property type="match status" value="1"/>
</dbReference>
<dbReference type="PANTHER" id="PTHR20836:SF0">
    <property type="entry name" value="4-HYDROXY-TETRAHYDRODIPICOLINATE REDUCTASE 1, CHLOROPLASTIC-RELATED"/>
    <property type="match status" value="1"/>
</dbReference>
<dbReference type="PANTHER" id="PTHR20836">
    <property type="entry name" value="DIHYDRODIPICOLINATE REDUCTASE"/>
    <property type="match status" value="1"/>
</dbReference>
<dbReference type="Pfam" id="PF05173">
    <property type="entry name" value="DapB_C"/>
    <property type="match status" value="1"/>
</dbReference>
<dbReference type="Pfam" id="PF01113">
    <property type="entry name" value="DapB_N"/>
    <property type="match status" value="1"/>
</dbReference>
<dbReference type="PIRSF" id="PIRSF000161">
    <property type="entry name" value="DHPR"/>
    <property type="match status" value="1"/>
</dbReference>
<dbReference type="SUPFAM" id="SSF55347">
    <property type="entry name" value="Glyceraldehyde-3-phosphate dehydrogenase-like, C-terminal domain"/>
    <property type="match status" value="1"/>
</dbReference>
<dbReference type="SUPFAM" id="SSF51735">
    <property type="entry name" value="NAD(P)-binding Rossmann-fold domains"/>
    <property type="match status" value="1"/>
</dbReference>
<dbReference type="PROSITE" id="PS01298">
    <property type="entry name" value="DAPB"/>
    <property type="match status" value="1"/>
</dbReference>
<feature type="chain" id="PRO_1000093993" description="4-hydroxy-tetrahydrodipicolinate reductase">
    <location>
        <begin position="1"/>
        <end position="271"/>
    </location>
</feature>
<feature type="active site" description="Proton donor/acceptor" evidence="1">
    <location>
        <position position="157"/>
    </location>
</feature>
<feature type="active site" description="Proton donor" evidence="1">
    <location>
        <position position="161"/>
    </location>
</feature>
<feature type="binding site" evidence="1">
    <location>
        <begin position="10"/>
        <end position="15"/>
    </location>
    <ligand>
        <name>NAD(+)</name>
        <dbReference type="ChEBI" id="CHEBI:57540"/>
    </ligand>
</feature>
<feature type="binding site" evidence="1">
    <location>
        <position position="36"/>
    </location>
    <ligand>
        <name>NAD(+)</name>
        <dbReference type="ChEBI" id="CHEBI:57540"/>
    </ligand>
</feature>
<feature type="binding site" evidence="1">
    <location>
        <begin position="100"/>
        <end position="102"/>
    </location>
    <ligand>
        <name>NAD(+)</name>
        <dbReference type="ChEBI" id="CHEBI:57540"/>
    </ligand>
</feature>
<feature type="binding site" evidence="1">
    <location>
        <begin position="124"/>
        <end position="127"/>
    </location>
    <ligand>
        <name>NAD(+)</name>
        <dbReference type="ChEBI" id="CHEBI:57540"/>
    </ligand>
</feature>
<feature type="binding site" evidence="1">
    <location>
        <position position="158"/>
    </location>
    <ligand>
        <name>(S)-2,3,4,5-tetrahydrodipicolinate</name>
        <dbReference type="ChEBI" id="CHEBI:16845"/>
    </ligand>
</feature>
<feature type="binding site" evidence="1">
    <location>
        <begin position="167"/>
        <end position="168"/>
    </location>
    <ligand>
        <name>(S)-2,3,4,5-tetrahydrodipicolinate</name>
        <dbReference type="ChEBI" id="CHEBI:16845"/>
    </ligand>
</feature>